<proteinExistence type="inferred from homology"/>
<sequence length="263" mass="28640">MKKIHPSAVIEEGAQLGDDVVIEAYAYVGKDTKIGNDVVIKQGARILSDTTIGDHSRVFSYAIVGDIPQDISYKEEQKSGVVIGKNATIREFATINSGTAKGDGFTRIGDNAFIMAYCHIAHDCLLGNNIILANNATLAGHVELGDFTVVGGLTPIHQFVKVGEGCMIAGASALSQDIVPFCLAEGNRASIRSLNLVGTRRRFDKDEVDRLSRAFKTLFRQGDLKENAKNLLENQESENVKKMCHFILETKRGIPVYRGKNNA</sequence>
<protein>
    <recommendedName>
        <fullName evidence="1">Acyl-[acyl-carrier-protein]--UDP-N-acetylglucosamine O-acyltransferase</fullName>
        <shortName evidence="1">UDP-N-acetylglucosamine acyltransferase</shortName>
        <ecNumber evidence="1">2.3.1.129</ecNumber>
    </recommendedName>
</protein>
<gene>
    <name evidence="1" type="primary">lpxA</name>
    <name type="ordered locus">CJJ81176_0301</name>
</gene>
<accession>A1VXZ8</accession>
<feature type="chain" id="PRO_0000302567" description="Acyl-[acyl-carrier-protein]--UDP-N-acetylglucosamine O-acyltransferase">
    <location>
        <begin position="1"/>
        <end position="263"/>
    </location>
</feature>
<dbReference type="EC" id="2.3.1.129" evidence="1"/>
<dbReference type="EMBL" id="CP000538">
    <property type="protein sequence ID" value="EAQ73051.1"/>
    <property type="molecule type" value="Genomic_DNA"/>
</dbReference>
<dbReference type="RefSeq" id="WP_002857291.1">
    <property type="nucleotide sequence ID" value="NC_008787.1"/>
</dbReference>
<dbReference type="SMR" id="A1VXZ8"/>
<dbReference type="KEGG" id="cjj:CJJ81176_0301"/>
<dbReference type="eggNOG" id="COG1043">
    <property type="taxonomic scope" value="Bacteria"/>
</dbReference>
<dbReference type="HOGENOM" id="CLU_061249_0_0_7"/>
<dbReference type="UniPathway" id="UPA00359">
    <property type="reaction ID" value="UER00477"/>
</dbReference>
<dbReference type="Proteomes" id="UP000000646">
    <property type="component" value="Chromosome"/>
</dbReference>
<dbReference type="GO" id="GO:0005737">
    <property type="term" value="C:cytoplasm"/>
    <property type="evidence" value="ECO:0007669"/>
    <property type="project" value="UniProtKB-SubCell"/>
</dbReference>
<dbReference type="GO" id="GO:0016020">
    <property type="term" value="C:membrane"/>
    <property type="evidence" value="ECO:0007669"/>
    <property type="project" value="GOC"/>
</dbReference>
<dbReference type="GO" id="GO:0008780">
    <property type="term" value="F:acyl-[acyl-carrier-protein]-UDP-N-acetylglucosamine O-acyltransferase activity"/>
    <property type="evidence" value="ECO:0007669"/>
    <property type="project" value="UniProtKB-UniRule"/>
</dbReference>
<dbReference type="GO" id="GO:0009245">
    <property type="term" value="P:lipid A biosynthetic process"/>
    <property type="evidence" value="ECO:0007669"/>
    <property type="project" value="UniProtKB-UniRule"/>
</dbReference>
<dbReference type="CDD" id="cd03351">
    <property type="entry name" value="LbH_UDP-GlcNAc_AT"/>
    <property type="match status" value="1"/>
</dbReference>
<dbReference type="Gene3D" id="2.160.10.10">
    <property type="entry name" value="Hexapeptide repeat proteins"/>
    <property type="match status" value="1"/>
</dbReference>
<dbReference type="Gene3D" id="1.20.1180.10">
    <property type="entry name" value="Udp N-acetylglucosamine O-acyltransferase, C-terminal domain"/>
    <property type="match status" value="1"/>
</dbReference>
<dbReference type="HAMAP" id="MF_00387">
    <property type="entry name" value="LpxA"/>
    <property type="match status" value="1"/>
</dbReference>
<dbReference type="InterPro" id="IPR029098">
    <property type="entry name" value="Acetyltransf_C"/>
</dbReference>
<dbReference type="InterPro" id="IPR037157">
    <property type="entry name" value="Acetyltransf_C_sf"/>
</dbReference>
<dbReference type="InterPro" id="IPR001451">
    <property type="entry name" value="Hexapep"/>
</dbReference>
<dbReference type="InterPro" id="IPR018357">
    <property type="entry name" value="Hexapep_transf_CS"/>
</dbReference>
<dbReference type="InterPro" id="IPR010137">
    <property type="entry name" value="Lipid_A_LpxA"/>
</dbReference>
<dbReference type="InterPro" id="IPR011004">
    <property type="entry name" value="Trimer_LpxA-like_sf"/>
</dbReference>
<dbReference type="NCBIfam" id="TIGR01852">
    <property type="entry name" value="lipid_A_lpxA"/>
    <property type="match status" value="1"/>
</dbReference>
<dbReference type="NCBIfam" id="NF003657">
    <property type="entry name" value="PRK05289.1"/>
    <property type="match status" value="1"/>
</dbReference>
<dbReference type="PANTHER" id="PTHR43480">
    <property type="entry name" value="ACYL-[ACYL-CARRIER-PROTEIN]--UDP-N-ACETYLGLUCOSAMINE O-ACYLTRANSFERASE"/>
    <property type="match status" value="1"/>
</dbReference>
<dbReference type="PANTHER" id="PTHR43480:SF1">
    <property type="entry name" value="ACYL-[ACYL-CARRIER-PROTEIN]--UDP-N-ACETYLGLUCOSAMINE O-ACYLTRANSFERASE, MITOCHONDRIAL-RELATED"/>
    <property type="match status" value="1"/>
</dbReference>
<dbReference type="Pfam" id="PF13720">
    <property type="entry name" value="Acetyltransf_11"/>
    <property type="match status" value="1"/>
</dbReference>
<dbReference type="Pfam" id="PF00132">
    <property type="entry name" value="Hexapep"/>
    <property type="match status" value="1"/>
</dbReference>
<dbReference type="PIRSF" id="PIRSF000456">
    <property type="entry name" value="UDP-GlcNAc_acltr"/>
    <property type="match status" value="1"/>
</dbReference>
<dbReference type="SUPFAM" id="SSF51161">
    <property type="entry name" value="Trimeric LpxA-like enzymes"/>
    <property type="match status" value="1"/>
</dbReference>
<dbReference type="PROSITE" id="PS00101">
    <property type="entry name" value="HEXAPEP_TRANSFERASES"/>
    <property type="match status" value="2"/>
</dbReference>
<keyword id="KW-0012">Acyltransferase</keyword>
<keyword id="KW-0963">Cytoplasm</keyword>
<keyword id="KW-0441">Lipid A biosynthesis</keyword>
<keyword id="KW-0444">Lipid biosynthesis</keyword>
<keyword id="KW-0443">Lipid metabolism</keyword>
<keyword id="KW-0677">Repeat</keyword>
<keyword id="KW-0808">Transferase</keyword>
<organism>
    <name type="scientific">Campylobacter jejuni subsp. jejuni serotype O:23/36 (strain 81-176)</name>
    <dbReference type="NCBI Taxonomy" id="354242"/>
    <lineage>
        <taxon>Bacteria</taxon>
        <taxon>Pseudomonadati</taxon>
        <taxon>Campylobacterota</taxon>
        <taxon>Epsilonproteobacteria</taxon>
        <taxon>Campylobacterales</taxon>
        <taxon>Campylobacteraceae</taxon>
        <taxon>Campylobacter</taxon>
    </lineage>
</organism>
<evidence type="ECO:0000255" key="1">
    <source>
        <dbReference type="HAMAP-Rule" id="MF_00387"/>
    </source>
</evidence>
<reference key="1">
    <citation type="submission" date="2006-12" db="EMBL/GenBank/DDBJ databases">
        <authorList>
            <person name="Fouts D.E."/>
            <person name="Nelson K.E."/>
            <person name="Sebastian Y."/>
        </authorList>
    </citation>
    <scope>NUCLEOTIDE SEQUENCE [LARGE SCALE GENOMIC DNA]</scope>
    <source>
        <strain>81-176</strain>
    </source>
</reference>
<comment type="function">
    <text evidence="1">Involved in the biosynthesis of lipid A, a phosphorylated glycolipid that anchors the lipopolysaccharide to the outer membrane of the cell.</text>
</comment>
<comment type="catalytic activity">
    <reaction evidence="1">
        <text>a (3R)-hydroxyacyl-[ACP] + UDP-N-acetyl-alpha-D-glucosamine = a UDP-3-O-[(3R)-3-hydroxyacyl]-N-acetyl-alpha-D-glucosamine + holo-[ACP]</text>
        <dbReference type="Rhea" id="RHEA:67812"/>
        <dbReference type="Rhea" id="RHEA-COMP:9685"/>
        <dbReference type="Rhea" id="RHEA-COMP:9945"/>
        <dbReference type="ChEBI" id="CHEBI:57705"/>
        <dbReference type="ChEBI" id="CHEBI:64479"/>
        <dbReference type="ChEBI" id="CHEBI:78827"/>
        <dbReference type="ChEBI" id="CHEBI:173225"/>
        <dbReference type="EC" id="2.3.1.129"/>
    </reaction>
</comment>
<comment type="pathway">
    <text evidence="1">Glycolipid biosynthesis; lipid IV(A) biosynthesis; lipid IV(A) from (3R)-3-hydroxytetradecanoyl-[acyl-carrier-protein] and UDP-N-acetyl-alpha-D-glucosamine: step 1/6.</text>
</comment>
<comment type="subunit">
    <text evidence="1">Homotrimer.</text>
</comment>
<comment type="subcellular location">
    <subcellularLocation>
        <location evidence="1">Cytoplasm</location>
    </subcellularLocation>
</comment>
<comment type="similarity">
    <text evidence="1">Belongs to the transferase hexapeptide repeat family. LpxA subfamily.</text>
</comment>
<name>LPXA_CAMJJ</name>